<protein>
    <recommendedName>
        <fullName evidence="1">RNA-binding protein Hfq</fullName>
    </recommendedName>
</protein>
<sequence length="82" mass="9117">MSKPANNLQDIFLNGARKNRIPVIVYLTNGFQIRGIVKGFDNFTVILECDGKQMMVYKHALSTITPSKAILFNTPAGTDDRS</sequence>
<dbReference type="EMBL" id="AP009049">
    <property type="protein sequence ID" value="BAH06518.1"/>
    <property type="molecule type" value="Genomic_DNA"/>
</dbReference>
<dbReference type="RefSeq" id="WP_012101972.1">
    <property type="nucleotide sequence ID" value="NC_011837.1"/>
</dbReference>
<dbReference type="SMR" id="B9E1Z3"/>
<dbReference type="KEGG" id="ckr:CKR_1467"/>
<dbReference type="HOGENOM" id="CLU_113688_0_2_9"/>
<dbReference type="Proteomes" id="UP000007969">
    <property type="component" value="Chromosome"/>
</dbReference>
<dbReference type="GO" id="GO:0005829">
    <property type="term" value="C:cytosol"/>
    <property type="evidence" value="ECO:0007669"/>
    <property type="project" value="TreeGrafter"/>
</dbReference>
<dbReference type="GO" id="GO:0003723">
    <property type="term" value="F:RNA binding"/>
    <property type="evidence" value="ECO:0007669"/>
    <property type="project" value="UniProtKB-UniRule"/>
</dbReference>
<dbReference type="GO" id="GO:0006355">
    <property type="term" value="P:regulation of DNA-templated transcription"/>
    <property type="evidence" value="ECO:0007669"/>
    <property type="project" value="InterPro"/>
</dbReference>
<dbReference type="GO" id="GO:0043487">
    <property type="term" value="P:regulation of RNA stability"/>
    <property type="evidence" value="ECO:0007669"/>
    <property type="project" value="TreeGrafter"/>
</dbReference>
<dbReference type="GO" id="GO:0045974">
    <property type="term" value="P:regulation of translation, ncRNA-mediated"/>
    <property type="evidence" value="ECO:0007669"/>
    <property type="project" value="TreeGrafter"/>
</dbReference>
<dbReference type="CDD" id="cd01716">
    <property type="entry name" value="Hfq"/>
    <property type="match status" value="1"/>
</dbReference>
<dbReference type="Gene3D" id="2.30.30.100">
    <property type="match status" value="1"/>
</dbReference>
<dbReference type="HAMAP" id="MF_00436">
    <property type="entry name" value="Hfq"/>
    <property type="match status" value="1"/>
</dbReference>
<dbReference type="InterPro" id="IPR005001">
    <property type="entry name" value="Hfq"/>
</dbReference>
<dbReference type="InterPro" id="IPR010920">
    <property type="entry name" value="LSM_dom_sf"/>
</dbReference>
<dbReference type="InterPro" id="IPR047575">
    <property type="entry name" value="Sm"/>
</dbReference>
<dbReference type="NCBIfam" id="TIGR02383">
    <property type="entry name" value="Hfq"/>
    <property type="match status" value="1"/>
</dbReference>
<dbReference type="NCBIfam" id="NF001602">
    <property type="entry name" value="PRK00395.1"/>
    <property type="match status" value="1"/>
</dbReference>
<dbReference type="PANTHER" id="PTHR34772">
    <property type="entry name" value="RNA-BINDING PROTEIN HFQ"/>
    <property type="match status" value="1"/>
</dbReference>
<dbReference type="PANTHER" id="PTHR34772:SF1">
    <property type="entry name" value="RNA-BINDING PROTEIN HFQ"/>
    <property type="match status" value="1"/>
</dbReference>
<dbReference type="Pfam" id="PF17209">
    <property type="entry name" value="Hfq"/>
    <property type="match status" value="1"/>
</dbReference>
<dbReference type="SUPFAM" id="SSF50182">
    <property type="entry name" value="Sm-like ribonucleoproteins"/>
    <property type="match status" value="1"/>
</dbReference>
<dbReference type="PROSITE" id="PS52002">
    <property type="entry name" value="SM"/>
    <property type="match status" value="1"/>
</dbReference>
<gene>
    <name evidence="1" type="primary">hfq</name>
    <name type="ordered locus">CKR_1467</name>
</gene>
<feature type="chain" id="PRO_1000135028" description="RNA-binding protein Hfq">
    <location>
        <begin position="1"/>
        <end position="82"/>
    </location>
</feature>
<feature type="domain" description="Sm" evidence="2">
    <location>
        <begin position="10"/>
        <end position="70"/>
    </location>
</feature>
<proteinExistence type="inferred from homology"/>
<name>HFQ_CLOK1</name>
<accession>B9E1Z3</accession>
<comment type="function">
    <text evidence="1">RNA chaperone that binds small regulatory RNA (sRNAs) and mRNAs to facilitate mRNA translational regulation in response to envelope stress, environmental stress and changes in metabolite concentrations. Also binds with high specificity to tRNAs.</text>
</comment>
<comment type="subunit">
    <text evidence="1">Homohexamer.</text>
</comment>
<comment type="similarity">
    <text evidence="1">Belongs to the Hfq family.</text>
</comment>
<organism>
    <name type="scientific">Clostridium kluyveri (strain NBRC 12016)</name>
    <dbReference type="NCBI Taxonomy" id="583346"/>
    <lineage>
        <taxon>Bacteria</taxon>
        <taxon>Bacillati</taxon>
        <taxon>Bacillota</taxon>
        <taxon>Clostridia</taxon>
        <taxon>Eubacteriales</taxon>
        <taxon>Clostridiaceae</taxon>
        <taxon>Clostridium</taxon>
    </lineage>
</organism>
<keyword id="KW-0694">RNA-binding</keyword>
<keyword id="KW-0346">Stress response</keyword>
<evidence type="ECO:0000255" key="1">
    <source>
        <dbReference type="HAMAP-Rule" id="MF_00436"/>
    </source>
</evidence>
<evidence type="ECO:0000255" key="2">
    <source>
        <dbReference type="PROSITE-ProRule" id="PRU01346"/>
    </source>
</evidence>
<reference key="1">
    <citation type="submission" date="2005-09" db="EMBL/GenBank/DDBJ databases">
        <title>Complete genome sequence of Clostridium kluyveri and comparative genomics of Clostridia species.</title>
        <authorList>
            <person name="Inui M."/>
            <person name="Nonaka H."/>
            <person name="Shinoda Y."/>
            <person name="Ikenaga Y."/>
            <person name="Abe M."/>
            <person name="Naito K."/>
            <person name="Vertes A.A."/>
            <person name="Yukawa H."/>
        </authorList>
    </citation>
    <scope>NUCLEOTIDE SEQUENCE [LARGE SCALE GENOMIC DNA]</scope>
    <source>
        <strain>NBRC 12016</strain>
    </source>
</reference>